<gene>
    <name type="ORF">SPAC2E11.16c</name>
    <name type="ORF">SPACUNK4.16c</name>
</gene>
<dbReference type="EC" id="2.4.1.15"/>
<dbReference type="EMBL" id="CU329670">
    <property type="protein sequence ID" value="CAA20146.1"/>
    <property type="molecule type" value="Genomic_DNA"/>
</dbReference>
<dbReference type="PIR" id="T41711">
    <property type="entry name" value="T41711"/>
</dbReference>
<dbReference type="SMR" id="O14081"/>
<dbReference type="BioGRID" id="278957">
    <property type="interactions" value="19"/>
</dbReference>
<dbReference type="FunCoup" id="O14081">
    <property type="interactions" value="43"/>
</dbReference>
<dbReference type="STRING" id="284812.O14081"/>
<dbReference type="CAZy" id="GT20">
    <property type="family name" value="Glycosyltransferase Family 20"/>
</dbReference>
<dbReference type="iPTMnet" id="O14081"/>
<dbReference type="SwissPalm" id="O14081"/>
<dbReference type="PaxDb" id="4896-SPACUNK4.16c.1"/>
<dbReference type="EnsemblFungi" id="SPACUNK4.16c.1">
    <property type="protein sequence ID" value="SPACUNK4.16c.1:pep"/>
    <property type="gene ID" value="SPACUNK4.16c"/>
</dbReference>
<dbReference type="KEGG" id="spo:2542498"/>
<dbReference type="PomBase" id="SPACUNK4.16c"/>
<dbReference type="VEuPathDB" id="FungiDB:SPACUNK4.16c"/>
<dbReference type="eggNOG" id="KOG1050">
    <property type="taxonomic scope" value="Eukaryota"/>
</dbReference>
<dbReference type="HOGENOM" id="CLU_002351_2_2_1"/>
<dbReference type="InParanoid" id="O14081"/>
<dbReference type="OMA" id="MFYESAS"/>
<dbReference type="PhylomeDB" id="O14081"/>
<dbReference type="PRO" id="PR:O14081"/>
<dbReference type="Proteomes" id="UP000002485">
    <property type="component" value="Chromosome I"/>
</dbReference>
<dbReference type="GO" id="GO:0005946">
    <property type="term" value="C:alpha,alpha-trehalose-phosphate synthase complex (UDP-forming)"/>
    <property type="evidence" value="ECO:0000318"/>
    <property type="project" value="GO_Central"/>
</dbReference>
<dbReference type="GO" id="GO:0005829">
    <property type="term" value="C:cytosol"/>
    <property type="evidence" value="ECO:0007005"/>
    <property type="project" value="PomBase"/>
</dbReference>
<dbReference type="GO" id="GO:0003825">
    <property type="term" value="F:alpha,alpha-trehalose-phosphate synthase (UDP-forming) activity"/>
    <property type="evidence" value="ECO:0000266"/>
    <property type="project" value="PomBase"/>
</dbReference>
<dbReference type="GO" id="GO:0005992">
    <property type="term" value="P:trehalose biosynthetic process"/>
    <property type="evidence" value="ECO:0000266"/>
    <property type="project" value="PomBase"/>
</dbReference>
<dbReference type="CDD" id="cd03788">
    <property type="entry name" value="GT20_TPS"/>
    <property type="match status" value="1"/>
</dbReference>
<dbReference type="FunFam" id="3.40.50.2000:FF:000099">
    <property type="entry name" value="Alpha,alpha-trehalose phosphate synthase subunit, putative"/>
    <property type="match status" value="1"/>
</dbReference>
<dbReference type="FunFam" id="3.30.70.1020:FF:000001">
    <property type="entry name" value="Alpha,alpha-trehalose-phosphate synthase [UDP-forming] 1"/>
    <property type="match status" value="1"/>
</dbReference>
<dbReference type="FunFam" id="3.40.50.2000:FF:000809">
    <property type="entry name" value="Putative alpha,alpha-trehalose-phosphate synthase [UDP-forming] 106 kDa subunit"/>
    <property type="match status" value="1"/>
</dbReference>
<dbReference type="Gene3D" id="3.40.50.2000">
    <property type="entry name" value="Glycogen Phosphorylase B"/>
    <property type="match status" value="2"/>
</dbReference>
<dbReference type="Gene3D" id="3.40.50.1000">
    <property type="entry name" value="HAD superfamily/HAD-like"/>
    <property type="match status" value="1"/>
</dbReference>
<dbReference type="Gene3D" id="3.30.70.1020">
    <property type="entry name" value="Trehalose-6-phosphate phosphatase related protein, domain 2"/>
    <property type="match status" value="1"/>
</dbReference>
<dbReference type="InterPro" id="IPR001830">
    <property type="entry name" value="Glyco_trans_20"/>
</dbReference>
<dbReference type="InterPro" id="IPR036412">
    <property type="entry name" value="HAD-like_sf"/>
</dbReference>
<dbReference type="InterPro" id="IPR023214">
    <property type="entry name" value="HAD_sf"/>
</dbReference>
<dbReference type="InterPro" id="IPR003337">
    <property type="entry name" value="Trehalose_PPase"/>
</dbReference>
<dbReference type="PANTHER" id="PTHR10788:SF15">
    <property type="entry name" value="TREHALOSE SYNTHASE COMPLEX REGULATORY SUBUNIT TPS3-RELATED"/>
    <property type="match status" value="1"/>
</dbReference>
<dbReference type="PANTHER" id="PTHR10788">
    <property type="entry name" value="TREHALOSE-6-PHOSPHATE SYNTHASE"/>
    <property type="match status" value="1"/>
</dbReference>
<dbReference type="Pfam" id="PF00982">
    <property type="entry name" value="Glyco_transf_20"/>
    <property type="match status" value="1"/>
</dbReference>
<dbReference type="Pfam" id="PF02358">
    <property type="entry name" value="Trehalose_PPase"/>
    <property type="match status" value="1"/>
</dbReference>
<dbReference type="SUPFAM" id="SSF56784">
    <property type="entry name" value="HAD-like"/>
    <property type="match status" value="1"/>
</dbReference>
<dbReference type="SUPFAM" id="SSF53756">
    <property type="entry name" value="UDP-Glycosyltransferase/glycogen phosphorylase"/>
    <property type="match status" value="1"/>
</dbReference>
<reference key="1">
    <citation type="journal article" date="2002" name="Nature">
        <title>The genome sequence of Schizosaccharomyces pombe.</title>
        <authorList>
            <person name="Wood V."/>
            <person name="Gwilliam R."/>
            <person name="Rajandream M.A."/>
            <person name="Lyne M.H."/>
            <person name="Lyne R."/>
            <person name="Stewart A."/>
            <person name="Sgouros J.G."/>
            <person name="Peat N."/>
            <person name="Hayles J."/>
            <person name="Baker S.G."/>
            <person name="Basham D."/>
            <person name="Bowman S."/>
            <person name="Brooks K."/>
            <person name="Brown D."/>
            <person name="Brown S."/>
            <person name="Chillingworth T."/>
            <person name="Churcher C.M."/>
            <person name="Collins M."/>
            <person name="Connor R."/>
            <person name="Cronin A."/>
            <person name="Davis P."/>
            <person name="Feltwell T."/>
            <person name="Fraser A."/>
            <person name="Gentles S."/>
            <person name="Goble A."/>
            <person name="Hamlin N."/>
            <person name="Harris D.E."/>
            <person name="Hidalgo J."/>
            <person name="Hodgson G."/>
            <person name="Holroyd S."/>
            <person name="Hornsby T."/>
            <person name="Howarth S."/>
            <person name="Huckle E.J."/>
            <person name="Hunt S."/>
            <person name="Jagels K."/>
            <person name="James K.D."/>
            <person name="Jones L."/>
            <person name="Jones M."/>
            <person name="Leather S."/>
            <person name="McDonald S."/>
            <person name="McLean J."/>
            <person name="Mooney P."/>
            <person name="Moule S."/>
            <person name="Mungall K.L."/>
            <person name="Murphy L.D."/>
            <person name="Niblett D."/>
            <person name="Odell C."/>
            <person name="Oliver K."/>
            <person name="O'Neil S."/>
            <person name="Pearson D."/>
            <person name="Quail M.A."/>
            <person name="Rabbinowitsch E."/>
            <person name="Rutherford K.M."/>
            <person name="Rutter S."/>
            <person name="Saunders D."/>
            <person name="Seeger K."/>
            <person name="Sharp S."/>
            <person name="Skelton J."/>
            <person name="Simmonds M.N."/>
            <person name="Squares R."/>
            <person name="Squares S."/>
            <person name="Stevens K."/>
            <person name="Taylor K."/>
            <person name="Taylor R.G."/>
            <person name="Tivey A."/>
            <person name="Walsh S.V."/>
            <person name="Warren T."/>
            <person name="Whitehead S."/>
            <person name="Woodward J.R."/>
            <person name="Volckaert G."/>
            <person name="Aert R."/>
            <person name="Robben J."/>
            <person name="Grymonprez B."/>
            <person name="Weltjens I."/>
            <person name="Vanstreels E."/>
            <person name="Rieger M."/>
            <person name="Schaefer M."/>
            <person name="Mueller-Auer S."/>
            <person name="Gabel C."/>
            <person name="Fuchs M."/>
            <person name="Duesterhoeft A."/>
            <person name="Fritzc C."/>
            <person name="Holzer E."/>
            <person name="Moestl D."/>
            <person name="Hilbert H."/>
            <person name="Borzym K."/>
            <person name="Langer I."/>
            <person name="Beck A."/>
            <person name="Lehrach H."/>
            <person name="Reinhardt R."/>
            <person name="Pohl T.M."/>
            <person name="Eger P."/>
            <person name="Zimmermann W."/>
            <person name="Wedler H."/>
            <person name="Wambutt R."/>
            <person name="Purnelle B."/>
            <person name="Goffeau A."/>
            <person name="Cadieu E."/>
            <person name="Dreano S."/>
            <person name="Gloux S."/>
            <person name="Lelaure V."/>
            <person name="Mottier S."/>
            <person name="Galibert F."/>
            <person name="Aves S.J."/>
            <person name="Xiang Z."/>
            <person name="Hunt C."/>
            <person name="Moore K."/>
            <person name="Hurst S.M."/>
            <person name="Lucas M."/>
            <person name="Rochet M."/>
            <person name="Gaillardin C."/>
            <person name="Tallada V.A."/>
            <person name="Garzon A."/>
            <person name="Thode G."/>
            <person name="Daga R.R."/>
            <person name="Cruzado L."/>
            <person name="Jimenez J."/>
            <person name="Sanchez M."/>
            <person name="del Rey F."/>
            <person name="Benito J."/>
            <person name="Dominguez A."/>
            <person name="Revuelta J.L."/>
            <person name="Moreno S."/>
            <person name="Armstrong J."/>
            <person name="Forsburg S.L."/>
            <person name="Cerutti L."/>
            <person name="Lowe T."/>
            <person name="McCombie W.R."/>
            <person name="Paulsen I."/>
            <person name="Potashkin J."/>
            <person name="Shpakovski G.V."/>
            <person name="Ussery D."/>
            <person name="Barrell B.G."/>
            <person name="Nurse P."/>
        </authorList>
    </citation>
    <scope>NUCLEOTIDE SEQUENCE [LARGE SCALE GENOMIC DNA]</scope>
    <source>
        <strain>972 / ATCC 24843</strain>
    </source>
</reference>
<reference key="2">
    <citation type="journal article" date="2008" name="J. Proteome Res.">
        <title>Phosphoproteome analysis of fission yeast.</title>
        <authorList>
            <person name="Wilson-Grady J.T."/>
            <person name="Villen J."/>
            <person name="Gygi S.P."/>
        </authorList>
    </citation>
    <scope>PHOSPHORYLATION [LARGE SCALE ANALYSIS] AT SER-141; SER-145; SER-149; SER-150; SER-163; SER-177 AND THR-189</scope>
    <scope>IDENTIFICATION BY MASS SPECTROMETRY</scope>
</reference>
<comment type="catalytic activity">
    <reaction>
        <text>D-glucose 6-phosphate + UDP-alpha-D-glucose = alpha,alpha-trehalose 6-phosphate + UDP + H(+)</text>
        <dbReference type="Rhea" id="RHEA:18889"/>
        <dbReference type="ChEBI" id="CHEBI:15378"/>
        <dbReference type="ChEBI" id="CHEBI:58223"/>
        <dbReference type="ChEBI" id="CHEBI:58429"/>
        <dbReference type="ChEBI" id="CHEBI:58885"/>
        <dbReference type="ChEBI" id="CHEBI:61548"/>
        <dbReference type="EC" id="2.4.1.15"/>
    </reaction>
</comment>
<comment type="similarity">
    <text evidence="3">In the N-terminal section; belongs to the glycosyltransferase 20 family.</text>
</comment>
<feature type="chain" id="PRO_0000122512" description="Putative alpha,alpha-trehalose-phosphate synthase [UDP-forming] 106 kDa subunit">
    <location>
        <begin position="1"/>
        <end position="944"/>
    </location>
</feature>
<feature type="region of interest" description="Disordered" evidence="1">
    <location>
        <begin position="73"/>
        <end position="113"/>
    </location>
</feature>
<feature type="region of interest" description="Disordered" evidence="1">
    <location>
        <begin position="129"/>
        <end position="166"/>
    </location>
</feature>
<feature type="region of interest" description="Glycosyltransferase">
    <location>
        <begin position="173"/>
        <end position="652"/>
    </location>
</feature>
<feature type="compositionally biased region" description="Polar residues" evidence="1">
    <location>
        <begin position="73"/>
        <end position="84"/>
    </location>
</feature>
<feature type="compositionally biased region" description="Low complexity" evidence="1">
    <location>
        <begin position="101"/>
        <end position="113"/>
    </location>
</feature>
<feature type="modified residue" description="Phosphoserine" evidence="2">
    <location>
        <position position="141"/>
    </location>
</feature>
<feature type="modified residue" description="Phosphoserine" evidence="2">
    <location>
        <position position="145"/>
    </location>
</feature>
<feature type="modified residue" description="Phosphoserine" evidence="2">
    <location>
        <position position="149"/>
    </location>
</feature>
<feature type="modified residue" description="Phosphoserine" evidence="2">
    <location>
        <position position="150"/>
    </location>
</feature>
<feature type="modified residue" description="Phosphoserine" evidence="2">
    <location>
        <position position="163"/>
    </location>
</feature>
<feature type="modified residue" description="Phosphoserine" evidence="2">
    <location>
        <position position="177"/>
    </location>
</feature>
<feature type="modified residue" description="Phosphothreonine" evidence="2">
    <location>
        <position position="189"/>
    </location>
</feature>
<sequence>MGRILIAHLFLPSSVGFSFDTVPHDEVGSKFMQKEESKDWIADTPLDESAIVSEEESDDDSLLSDLPEEIDSTNAQSNIATPSPGTVAAAISGIQPPPKTPSSDSPSLENSLSNLNDLFKSRGRHMAFSKNDGTNLSLPPSRHQSPPPSSVLASQRHHRRHDSELEEFARRASRSLSFSMNGTPQRRMTFDAEAWKNVIFKIKPSSFGNASFYNAISAATRSKQFDDHLFVGTCGIPTDSLPDSLKERISHDYITEHSSLVVYPTDTDFVGHYNHYCKNILWPTFHYQIPDNPKSKAYEDHSWANYVKVNKAFADTIVDNYEQDDMIWINDYHLLLVPEMVRERLPRAKIGFFLHIPFPSSEVFRCLATRQEILKGMLGANILGFQIPEFAYHFLQTCSRLVNIDIRKNGVVSFENRQIDVIALPISIDPGFIDRCLASPPVEHWAKVLQDRFRGKHIILSHDKLDPIRGLRSKLISFERFLQKYPEYRENTILLQVAPESLQDSEHLPHISDIVTRINSAYSNIASRHVPVILLRQKLGYAQFLALMMISDALIDNSLREGISLTSHQFIYVQRKRHRPLILSEFVGSASILNDNAIIVNPWDYSKTAEAFRTALTMSEEECQKRNKAMCNLILRHDAASWAVTFQSLIKESWKEQIDMQRIPAFTAQLIKEPYQNAQKRLILLYFEGTISTWGSQYHNVMTSLQRTINLLNMLTSDPKNTVYVFSALSCQELEQLFQRVPKLGIVAENGCFVRSPPKGDATMPVSKKEIAELWKNKVLGTDLTWMKTVSEIFEYYAERTTGAYVENKDATVILHLREAEDDEAAMWAAKECCESVNNFNVPCSATIQNDMVVCRSNKVSKRLAAEDIYSANGGDYDFIFAASNDPDDDTVFSWMKNFKQSKKEVVPFTFSVCVSEHGNSTNADAESSGVFGFLQALEKVYSA</sequence>
<proteinExistence type="evidence at protein level"/>
<keyword id="KW-0328">Glycosyltransferase</keyword>
<keyword id="KW-0597">Phosphoprotein</keyword>
<keyword id="KW-1185">Reference proteome</keyword>
<keyword id="KW-0808">Transferase</keyword>
<evidence type="ECO:0000256" key="1">
    <source>
        <dbReference type="SAM" id="MobiDB-lite"/>
    </source>
</evidence>
<evidence type="ECO:0000269" key="2">
    <source>
    </source>
</evidence>
<evidence type="ECO:0000305" key="3"/>
<protein>
    <recommendedName>
        <fullName>Putative alpha,alpha-trehalose-phosphate synthase [UDP-forming] 106 kDa subunit</fullName>
        <ecNumber>2.4.1.15</ecNumber>
    </recommendedName>
    <alternativeName>
        <fullName>Trehalose-6-phosphate synthase</fullName>
    </alternativeName>
    <alternativeName>
        <fullName>UDP-glucose-glucosephosphate glucosyltransferase</fullName>
    </alternativeName>
</protein>
<accession>O14081</accession>
<organism>
    <name type="scientific">Schizosaccharomyces pombe (strain 972 / ATCC 24843)</name>
    <name type="common">Fission yeast</name>
    <dbReference type="NCBI Taxonomy" id="284812"/>
    <lineage>
        <taxon>Eukaryota</taxon>
        <taxon>Fungi</taxon>
        <taxon>Dikarya</taxon>
        <taxon>Ascomycota</taxon>
        <taxon>Taphrinomycotina</taxon>
        <taxon>Schizosaccharomycetes</taxon>
        <taxon>Schizosaccharomycetales</taxon>
        <taxon>Schizosaccharomycetaceae</taxon>
        <taxon>Schizosaccharomyces</taxon>
    </lineage>
</organism>
<name>TPSX_SCHPO</name>